<reference key="1">
    <citation type="journal article" date="1998" name="Microbiology">
        <title>The 172 kb prkA-addAB region from 83 degrees to 97 degrees of the Bacillus subtilis chromosome contains several dysfunctional genes, the glyB marker, many genes encoding transporter proteins, and the ubiquitous hit gene.</title>
        <authorList>
            <person name="Noback M.A."/>
            <person name="Holsappel S."/>
            <person name="Kiewiet R."/>
            <person name="Terpstra P."/>
            <person name="Wambutt R."/>
            <person name="Wedler H."/>
            <person name="Venema G."/>
            <person name="Bron S."/>
        </authorList>
    </citation>
    <scope>NUCLEOTIDE SEQUENCE [GENOMIC DNA]</scope>
    <source>
        <strain>168</strain>
    </source>
</reference>
<reference key="2">
    <citation type="journal article" date="1997" name="Nature">
        <title>The complete genome sequence of the Gram-positive bacterium Bacillus subtilis.</title>
        <authorList>
            <person name="Kunst F."/>
            <person name="Ogasawara N."/>
            <person name="Moszer I."/>
            <person name="Albertini A.M."/>
            <person name="Alloni G."/>
            <person name="Azevedo V."/>
            <person name="Bertero M.G."/>
            <person name="Bessieres P."/>
            <person name="Bolotin A."/>
            <person name="Borchert S."/>
            <person name="Borriss R."/>
            <person name="Boursier L."/>
            <person name="Brans A."/>
            <person name="Braun M."/>
            <person name="Brignell S.C."/>
            <person name="Bron S."/>
            <person name="Brouillet S."/>
            <person name="Bruschi C.V."/>
            <person name="Caldwell B."/>
            <person name="Capuano V."/>
            <person name="Carter N.M."/>
            <person name="Choi S.-K."/>
            <person name="Codani J.-J."/>
            <person name="Connerton I.F."/>
            <person name="Cummings N.J."/>
            <person name="Daniel R.A."/>
            <person name="Denizot F."/>
            <person name="Devine K.M."/>
            <person name="Duesterhoeft A."/>
            <person name="Ehrlich S.D."/>
            <person name="Emmerson P.T."/>
            <person name="Entian K.-D."/>
            <person name="Errington J."/>
            <person name="Fabret C."/>
            <person name="Ferrari E."/>
            <person name="Foulger D."/>
            <person name="Fritz C."/>
            <person name="Fujita M."/>
            <person name="Fujita Y."/>
            <person name="Fuma S."/>
            <person name="Galizzi A."/>
            <person name="Galleron N."/>
            <person name="Ghim S.-Y."/>
            <person name="Glaser P."/>
            <person name="Goffeau A."/>
            <person name="Golightly E.J."/>
            <person name="Grandi G."/>
            <person name="Guiseppi G."/>
            <person name="Guy B.J."/>
            <person name="Haga K."/>
            <person name="Haiech J."/>
            <person name="Harwood C.R."/>
            <person name="Henaut A."/>
            <person name="Hilbert H."/>
            <person name="Holsappel S."/>
            <person name="Hosono S."/>
            <person name="Hullo M.-F."/>
            <person name="Itaya M."/>
            <person name="Jones L.-M."/>
            <person name="Joris B."/>
            <person name="Karamata D."/>
            <person name="Kasahara Y."/>
            <person name="Klaerr-Blanchard M."/>
            <person name="Klein C."/>
            <person name="Kobayashi Y."/>
            <person name="Koetter P."/>
            <person name="Koningstein G."/>
            <person name="Krogh S."/>
            <person name="Kumano M."/>
            <person name="Kurita K."/>
            <person name="Lapidus A."/>
            <person name="Lardinois S."/>
            <person name="Lauber J."/>
            <person name="Lazarevic V."/>
            <person name="Lee S.-M."/>
            <person name="Levine A."/>
            <person name="Liu H."/>
            <person name="Masuda S."/>
            <person name="Mauel C."/>
            <person name="Medigue C."/>
            <person name="Medina N."/>
            <person name="Mellado R.P."/>
            <person name="Mizuno M."/>
            <person name="Moestl D."/>
            <person name="Nakai S."/>
            <person name="Noback M."/>
            <person name="Noone D."/>
            <person name="O'Reilly M."/>
            <person name="Ogawa K."/>
            <person name="Ogiwara A."/>
            <person name="Oudega B."/>
            <person name="Park S.-H."/>
            <person name="Parro V."/>
            <person name="Pohl T.M."/>
            <person name="Portetelle D."/>
            <person name="Porwollik S."/>
            <person name="Prescott A.M."/>
            <person name="Presecan E."/>
            <person name="Pujic P."/>
            <person name="Purnelle B."/>
            <person name="Rapoport G."/>
            <person name="Rey M."/>
            <person name="Reynolds S."/>
            <person name="Rieger M."/>
            <person name="Rivolta C."/>
            <person name="Rocha E."/>
            <person name="Roche B."/>
            <person name="Rose M."/>
            <person name="Sadaie Y."/>
            <person name="Sato T."/>
            <person name="Scanlan E."/>
            <person name="Schleich S."/>
            <person name="Schroeter R."/>
            <person name="Scoffone F."/>
            <person name="Sekiguchi J."/>
            <person name="Sekowska A."/>
            <person name="Seror S.J."/>
            <person name="Serror P."/>
            <person name="Shin B.-S."/>
            <person name="Soldo B."/>
            <person name="Sorokin A."/>
            <person name="Tacconi E."/>
            <person name="Takagi T."/>
            <person name="Takahashi H."/>
            <person name="Takemaru K."/>
            <person name="Takeuchi M."/>
            <person name="Tamakoshi A."/>
            <person name="Tanaka T."/>
            <person name="Terpstra P."/>
            <person name="Tognoni A."/>
            <person name="Tosato V."/>
            <person name="Uchiyama S."/>
            <person name="Vandenbol M."/>
            <person name="Vannier F."/>
            <person name="Vassarotti A."/>
            <person name="Viari A."/>
            <person name="Wambutt R."/>
            <person name="Wedler E."/>
            <person name="Wedler H."/>
            <person name="Weitzenegger T."/>
            <person name="Winters P."/>
            <person name="Wipat A."/>
            <person name="Yamamoto H."/>
            <person name="Yamane K."/>
            <person name="Yasumoto K."/>
            <person name="Yata K."/>
            <person name="Yoshida K."/>
            <person name="Yoshikawa H.-F."/>
            <person name="Zumstein E."/>
            <person name="Yoshikawa H."/>
            <person name="Danchin A."/>
        </authorList>
    </citation>
    <scope>NUCLEOTIDE SEQUENCE [LARGE SCALE GENOMIC DNA]</scope>
    <source>
        <strain>168</strain>
    </source>
</reference>
<gene>
    <name type="primary">yheE</name>
    <name type="ordered locus">BSU09760</name>
</gene>
<dbReference type="EMBL" id="Y14080">
    <property type="protein sequence ID" value="CAA74457.1"/>
    <property type="molecule type" value="Genomic_DNA"/>
</dbReference>
<dbReference type="EMBL" id="AL009126">
    <property type="protein sequence ID" value="CAB12815.1"/>
    <property type="molecule type" value="Genomic_DNA"/>
</dbReference>
<dbReference type="PIR" id="E69828">
    <property type="entry name" value="E69828"/>
</dbReference>
<dbReference type="RefSeq" id="NP_388857.1">
    <property type="nucleotide sequence ID" value="NC_000964.3"/>
</dbReference>
<dbReference type="RefSeq" id="WP_010886462.1">
    <property type="nucleotide sequence ID" value="NZ_OZ025638.1"/>
</dbReference>
<dbReference type="FunCoup" id="O07546">
    <property type="interactions" value="28"/>
</dbReference>
<dbReference type="STRING" id="224308.BSU09760"/>
<dbReference type="PaxDb" id="224308-BSU09760"/>
<dbReference type="EnsemblBacteria" id="CAB12815">
    <property type="protein sequence ID" value="CAB12815"/>
    <property type="gene ID" value="BSU_09760"/>
</dbReference>
<dbReference type="GeneID" id="939756"/>
<dbReference type="KEGG" id="bsu:BSU09760"/>
<dbReference type="PATRIC" id="fig|224308.43.peg.1018"/>
<dbReference type="eggNOG" id="ENOG5032YTI">
    <property type="taxonomic scope" value="Bacteria"/>
</dbReference>
<dbReference type="InParanoid" id="O07546"/>
<dbReference type="OrthoDB" id="2736244at2"/>
<dbReference type="BioCyc" id="BSUB:BSU09760-MONOMER"/>
<dbReference type="Proteomes" id="UP000001570">
    <property type="component" value="Chromosome"/>
</dbReference>
<dbReference type="InterPro" id="IPR017263">
    <property type="entry name" value="UCP037692"/>
</dbReference>
<dbReference type="Pfam" id="PF17277">
    <property type="entry name" value="DUF5342"/>
    <property type="match status" value="1"/>
</dbReference>
<dbReference type="PIRSF" id="PIRSF037692">
    <property type="entry name" value="UCP037692"/>
    <property type="match status" value="1"/>
</dbReference>
<keyword id="KW-1185">Reference proteome</keyword>
<protein>
    <recommendedName>
        <fullName>Uncharacterized protein YheE</fullName>
    </recommendedName>
</protein>
<proteinExistence type="predicted"/>
<accession>O07546</accession>
<sequence>MAVMISHFSWKPLFPKEKLPGWKISFYYKGTHYEGIYHKSGEIEWGDLFPARADEPALTNEIHELMLFHIYD</sequence>
<name>YHEE_BACSU</name>
<organism>
    <name type="scientific">Bacillus subtilis (strain 168)</name>
    <dbReference type="NCBI Taxonomy" id="224308"/>
    <lineage>
        <taxon>Bacteria</taxon>
        <taxon>Bacillati</taxon>
        <taxon>Bacillota</taxon>
        <taxon>Bacilli</taxon>
        <taxon>Bacillales</taxon>
        <taxon>Bacillaceae</taxon>
        <taxon>Bacillus</taxon>
    </lineage>
</organism>
<feature type="chain" id="PRO_0000049573" description="Uncharacterized protein YheE">
    <location>
        <begin position="1"/>
        <end position="72"/>
    </location>
</feature>